<proteinExistence type="evidence at protein level"/>
<sequence length="169" mass="19328">MSVLQVLHIPDERLRKVAKPVEEVNAEIQRIVDDMFETMYAEEGIGLAATQVDIHQRIIVIDVSENRDERLVLINPELLEKSGETGIEEGCLSIPEQRALVPRAEKVKIRALDRDGKPFELEADGLLAICIQHEMDHLVGKLFMDYLSPLKQQRIRQKVEKLDRLKARA</sequence>
<feature type="initiator methionine" description="Removed" evidence="2">
    <location>
        <position position="1"/>
    </location>
</feature>
<feature type="chain" id="PRO_0000082779" description="Peptide deformylase">
    <location>
        <begin position="2"/>
        <end position="169"/>
    </location>
</feature>
<feature type="active site" evidence="4">
    <location>
        <position position="134"/>
    </location>
</feature>
<feature type="binding site" evidence="4">
    <location>
        <position position="91"/>
    </location>
    <ligand>
        <name>Fe cation</name>
        <dbReference type="ChEBI" id="CHEBI:24875"/>
    </ligand>
</feature>
<feature type="binding site" evidence="4">
    <location>
        <position position="133"/>
    </location>
    <ligand>
        <name>Fe cation</name>
        <dbReference type="ChEBI" id="CHEBI:24875"/>
    </ligand>
</feature>
<feature type="binding site" evidence="4">
    <location>
        <position position="137"/>
    </location>
    <ligand>
        <name>Fe cation</name>
        <dbReference type="ChEBI" id="CHEBI:24875"/>
    </ligand>
</feature>
<feature type="helix" evidence="11">
    <location>
        <begin position="12"/>
        <end position="15"/>
    </location>
</feature>
<feature type="helix" evidence="11">
    <location>
        <begin position="26"/>
        <end position="41"/>
    </location>
</feature>
<feature type="strand" evidence="11">
    <location>
        <begin position="45"/>
        <end position="48"/>
    </location>
</feature>
<feature type="helix" evidence="11">
    <location>
        <begin position="49"/>
        <end position="52"/>
    </location>
</feature>
<feature type="strand" evidence="11">
    <location>
        <begin position="56"/>
        <end position="61"/>
    </location>
</feature>
<feature type="strand" evidence="9">
    <location>
        <begin position="65"/>
        <end position="68"/>
    </location>
</feature>
<feature type="strand" evidence="11">
    <location>
        <begin position="71"/>
        <end position="82"/>
    </location>
</feature>
<feature type="strand" evidence="12">
    <location>
        <begin position="85"/>
        <end position="89"/>
    </location>
</feature>
<feature type="strand" evidence="10">
    <location>
        <begin position="92"/>
        <end position="94"/>
    </location>
</feature>
<feature type="strand" evidence="12">
    <location>
        <begin position="99"/>
        <end position="103"/>
    </location>
</feature>
<feature type="strand" evidence="11">
    <location>
        <begin position="105"/>
        <end position="112"/>
    </location>
</feature>
<feature type="strand" evidence="10">
    <location>
        <begin position="114"/>
        <end position="116"/>
    </location>
</feature>
<feature type="strand" evidence="11">
    <location>
        <begin position="118"/>
        <end position="123"/>
    </location>
</feature>
<feature type="helix" evidence="11">
    <location>
        <begin position="125"/>
        <end position="138"/>
    </location>
</feature>
<feature type="helix" evidence="11">
    <location>
        <begin position="143"/>
        <end position="146"/>
    </location>
</feature>
<feature type="helix" evidence="11">
    <location>
        <begin position="149"/>
        <end position="165"/>
    </location>
</feature>
<name>DEF_ECOLI</name>
<gene>
    <name type="primary">def</name>
    <name evidence="5" type="synonym">fms</name>
    <name type="ordered locus">b3287</name>
    <name type="ordered locus">JW3248</name>
</gene>
<protein>
    <recommendedName>
        <fullName>Peptide deformylase</fullName>
        <shortName>PDF</shortName>
        <ecNumber evidence="1">3.5.1.88</ecNumber>
    </recommendedName>
    <alternativeName>
        <fullName>Polypeptide deformylase</fullName>
    </alternativeName>
</protein>
<dbReference type="EC" id="3.5.1.88" evidence="1"/>
<dbReference type="EMBL" id="X77800">
    <property type="protein sequence ID" value="CAA54826.1"/>
    <property type="molecule type" value="Genomic_DNA"/>
</dbReference>
<dbReference type="EMBL" id="X63666">
    <property type="protein sequence ID" value="CAA45206.1"/>
    <property type="molecule type" value="Genomic_DNA"/>
</dbReference>
<dbReference type="EMBL" id="X65946">
    <property type="status" value="NOT_ANNOTATED_CDS"/>
    <property type="molecule type" value="Genomic_DNA"/>
</dbReference>
<dbReference type="EMBL" id="X77091">
    <property type="protein sequence ID" value="CAA54367.1"/>
    <property type="molecule type" value="Genomic_DNA"/>
</dbReference>
<dbReference type="EMBL" id="U18997">
    <property type="protein sequence ID" value="AAA58084.1"/>
    <property type="molecule type" value="Genomic_DNA"/>
</dbReference>
<dbReference type="EMBL" id="U00096">
    <property type="protein sequence ID" value="AAC76312.1"/>
    <property type="molecule type" value="Genomic_DNA"/>
</dbReference>
<dbReference type="EMBL" id="AP009048">
    <property type="protein sequence ID" value="BAE78005.1"/>
    <property type="molecule type" value="Genomic_DNA"/>
</dbReference>
<dbReference type="PIR" id="S23107">
    <property type="entry name" value="S23107"/>
</dbReference>
<dbReference type="RefSeq" id="NP_417745.1">
    <property type="nucleotide sequence ID" value="NC_000913.3"/>
</dbReference>
<dbReference type="RefSeq" id="WP_000114984.1">
    <property type="nucleotide sequence ID" value="NZ_STEB01000038.1"/>
</dbReference>
<dbReference type="PDB" id="1BS4">
    <property type="method" value="X-ray"/>
    <property type="resolution" value="1.90 A"/>
    <property type="chains" value="A/B/C=2-169"/>
</dbReference>
<dbReference type="PDB" id="1BS5">
    <property type="method" value="X-ray"/>
    <property type="resolution" value="2.50 A"/>
    <property type="chains" value="A/B/C=2-169"/>
</dbReference>
<dbReference type="PDB" id="1BS6">
    <property type="method" value="X-ray"/>
    <property type="resolution" value="2.10 A"/>
    <property type="chains" value="A/B/C=2-169"/>
</dbReference>
<dbReference type="PDB" id="1BS7">
    <property type="method" value="X-ray"/>
    <property type="resolution" value="2.50 A"/>
    <property type="chains" value="A/B/C=2-169"/>
</dbReference>
<dbReference type="PDB" id="1BS8">
    <property type="method" value="X-ray"/>
    <property type="resolution" value="2.20 A"/>
    <property type="chains" value="A/B/C=2-169"/>
</dbReference>
<dbReference type="PDB" id="1BSJ">
    <property type="method" value="X-ray"/>
    <property type="resolution" value="3.00 A"/>
    <property type="chains" value="A=2-169"/>
</dbReference>
<dbReference type="PDB" id="1BSK">
    <property type="method" value="X-ray"/>
    <property type="resolution" value="3.00 A"/>
    <property type="chains" value="A=2-169"/>
</dbReference>
<dbReference type="PDB" id="1BSZ">
    <property type="method" value="X-ray"/>
    <property type="resolution" value="1.90 A"/>
    <property type="chains" value="A/B/C=2-169"/>
</dbReference>
<dbReference type="PDB" id="1DEF">
    <property type="method" value="NMR"/>
    <property type="chains" value="A=2-148"/>
</dbReference>
<dbReference type="PDB" id="1DFF">
    <property type="method" value="X-ray"/>
    <property type="resolution" value="2.88 A"/>
    <property type="chains" value="A=2-165"/>
</dbReference>
<dbReference type="PDB" id="1G27">
    <property type="method" value="X-ray"/>
    <property type="resolution" value="2.10 A"/>
    <property type="chains" value="A/B/C=2-169"/>
</dbReference>
<dbReference type="PDB" id="1G2A">
    <property type="method" value="X-ray"/>
    <property type="resolution" value="1.75 A"/>
    <property type="chains" value="A/B/C=2-169"/>
</dbReference>
<dbReference type="PDB" id="1ICJ">
    <property type="method" value="X-ray"/>
    <property type="resolution" value="1.90 A"/>
    <property type="chains" value="A/B/C=2-169"/>
</dbReference>
<dbReference type="PDB" id="1LRU">
    <property type="method" value="X-ray"/>
    <property type="resolution" value="2.10 A"/>
    <property type="chains" value="A/B/C=2-169"/>
</dbReference>
<dbReference type="PDB" id="1XEM">
    <property type="method" value="X-ray"/>
    <property type="resolution" value="1.76 A"/>
    <property type="chains" value="A=2-169"/>
</dbReference>
<dbReference type="PDB" id="1XEN">
    <property type="method" value="X-ray"/>
    <property type="resolution" value="1.85 A"/>
    <property type="chains" value="A=2-169"/>
</dbReference>
<dbReference type="PDB" id="1XEO">
    <property type="method" value="X-ray"/>
    <property type="resolution" value="1.30 A"/>
    <property type="chains" value="A=2-169"/>
</dbReference>
<dbReference type="PDB" id="2AI8">
    <property type="method" value="X-ray"/>
    <property type="resolution" value="1.70 A"/>
    <property type="chains" value="A/B/C=2-169"/>
</dbReference>
<dbReference type="PDB" id="2DEF">
    <property type="method" value="NMR"/>
    <property type="chains" value="A=3-148"/>
</dbReference>
<dbReference type="PDB" id="2KMN">
    <property type="method" value="NMR"/>
    <property type="chains" value="A=2-148"/>
</dbReference>
<dbReference type="PDB" id="2W3T">
    <property type="method" value="X-ray"/>
    <property type="resolution" value="1.69 A"/>
    <property type="chains" value="A=2-169"/>
</dbReference>
<dbReference type="PDB" id="2W3U">
    <property type="method" value="X-ray"/>
    <property type="resolution" value="1.96 A"/>
    <property type="chains" value="A=2-169"/>
</dbReference>
<dbReference type="PDB" id="3K6L">
    <property type="method" value="X-ray"/>
    <property type="resolution" value="2.15 A"/>
    <property type="chains" value="A/B/C=1-169"/>
</dbReference>
<dbReference type="PDB" id="4AL2">
    <property type="method" value="X-ray"/>
    <property type="resolution" value="2.60 A"/>
    <property type="chains" value="A/B/C=2-169"/>
</dbReference>
<dbReference type="PDB" id="4AL3">
    <property type="method" value="X-ray"/>
    <property type="resolution" value="1.98 A"/>
    <property type="chains" value="A=2-169"/>
</dbReference>
<dbReference type="PDB" id="4AZ4">
    <property type="method" value="X-ray"/>
    <property type="resolution" value="1.80 A"/>
    <property type="chains" value="A=2-169"/>
</dbReference>
<dbReference type="PDB" id="4V5B">
    <property type="method" value="X-ray"/>
    <property type="resolution" value="3.74 A"/>
    <property type="chains" value="A5=147-162"/>
</dbReference>
<dbReference type="PDB" id="6IY7">
    <property type="method" value="EM"/>
    <property type="resolution" value="10.50 A"/>
    <property type="chains" value="P=1-169"/>
</dbReference>
<dbReference type="PDB" id="6IZI">
    <property type="method" value="EM"/>
    <property type="resolution" value="11.80 A"/>
    <property type="chains" value="P=1-169"/>
</dbReference>
<dbReference type="PDB" id="7D6Z">
    <property type="method" value="EM"/>
    <property type="resolution" value="3.40 A"/>
    <property type="chains" value="g=1-169"/>
</dbReference>
<dbReference type="PDB" id="7D80">
    <property type="method" value="EM"/>
    <property type="resolution" value="4.10 A"/>
    <property type="chains" value="3=1-169"/>
</dbReference>
<dbReference type="PDB" id="8OFE">
    <property type="method" value="X-ray"/>
    <property type="resolution" value="1.40 A"/>
    <property type="chains" value="A=1-169"/>
</dbReference>
<dbReference type="PDB" id="8RHR">
    <property type="method" value="X-ray"/>
    <property type="resolution" value="1.42 A"/>
    <property type="chains" value="A=1-169"/>
</dbReference>
<dbReference type="PDBsum" id="1BS4"/>
<dbReference type="PDBsum" id="1BS5"/>
<dbReference type="PDBsum" id="1BS6"/>
<dbReference type="PDBsum" id="1BS7"/>
<dbReference type="PDBsum" id="1BS8"/>
<dbReference type="PDBsum" id="1BSJ"/>
<dbReference type="PDBsum" id="1BSK"/>
<dbReference type="PDBsum" id="1BSZ"/>
<dbReference type="PDBsum" id="1DEF"/>
<dbReference type="PDBsum" id="1DFF"/>
<dbReference type="PDBsum" id="1G27"/>
<dbReference type="PDBsum" id="1G2A"/>
<dbReference type="PDBsum" id="1ICJ"/>
<dbReference type="PDBsum" id="1LRU"/>
<dbReference type="PDBsum" id="1XEM"/>
<dbReference type="PDBsum" id="1XEN"/>
<dbReference type="PDBsum" id="1XEO"/>
<dbReference type="PDBsum" id="2AI8"/>
<dbReference type="PDBsum" id="2DEF"/>
<dbReference type="PDBsum" id="2KMN"/>
<dbReference type="PDBsum" id="2W3T"/>
<dbReference type="PDBsum" id="2W3U"/>
<dbReference type="PDBsum" id="3K6L"/>
<dbReference type="PDBsum" id="4AL2"/>
<dbReference type="PDBsum" id="4AL3"/>
<dbReference type="PDBsum" id="4AZ4"/>
<dbReference type="PDBsum" id="4V5B"/>
<dbReference type="PDBsum" id="6IY7"/>
<dbReference type="PDBsum" id="6IZI"/>
<dbReference type="PDBsum" id="7D6Z"/>
<dbReference type="PDBsum" id="7D80"/>
<dbReference type="PDBsum" id="8OFE"/>
<dbReference type="PDBsum" id="8RHR"/>
<dbReference type="EMDB" id="EMD-30598"/>
<dbReference type="EMDB" id="EMD-30611"/>
<dbReference type="EMDB" id="EMD-9750"/>
<dbReference type="EMDB" id="EMD-9753"/>
<dbReference type="SMR" id="P0A6K3"/>
<dbReference type="BioGRID" id="4263416">
    <property type="interactions" value="67"/>
</dbReference>
<dbReference type="BioGRID" id="852092">
    <property type="interactions" value="4"/>
</dbReference>
<dbReference type="DIP" id="DIP-47953N"/>
<dbReference type="FunCoup" id="P0A6K3">
    <property type="interactions" value="659"/>
</dbReference>
<dbReference type="IntAct" id="P0A6K3">
    <property type="interactions" value="63"/>
</dbReference>
<dbReference type="STRING" id="511145.b3287"/>
<dbReference type="BindingDB" id="P0A6K3"/>
<dbReference type="DrugBank" id="DB02276">
    <property type="generic name" value="(S)-2-(Phosphonoxy)Caproyl-L-Leucyl-P-Nitroanilide"/>
</dbReference>
<dbReference type="DrugBank" id="DB04310">
    <property type="generic name" value="2-[(Formyl-Hydroxy-Amino)-Methyl]-Heptanoic Acid [1-(2-Hydroxymethyl-Pyrrolidine-1-Carbonyl)-2-Methyl-Propyl]-Amide"/>
</dbReference>
<dbReference type="DrugBank" id="DB08523">
    <property type="generic name" value="[HYDROXY(3-PHENYLPROPYL)AMINO]METHANOL"/>
</dbReference>
<dbReference type="DrugBank" id="DB04368">
    <property type="generic name" value="Bb-3497"/>
</dbReference>
<dbReference type="DrugBank" id="DB01942">
    <property type="generic name" value="Formic acid"/>
</dbReference>
<dbReference type="jPOST" id="P0A6K3"/>
<dbReference type="PaxDb" id="511145-b3287"/>
<dbReference type="EnsemblBacteria" id="AAC76312">
    <property type="protein sequence ID" value="AAC76312"/>
    <property type="gene ID" value="b3287"/>
</dbReference>
<dbReference type="GeneID" id="89518132"/>
<dbReference type="GeneID" id="947780"/>
<dbReference type="KEGG" id="ecj:JW3248"/>
<dbReference type="KEGG" id="eco:b3287"/>
<dbReference type="KEGG" id="ecoc:C3026_17870"/>
<dbReference type="PATRIC" id="fig|1411691.4.peg.3445"/>
<dbReference type="EchoBASE" id="EB1410"/>
<dbReference type="eggNOG" id="COG0242">
    <property type="taxonomic scope" value="Bacteria"/>
</dbReference>
<dbReference type="HOGENOM" id="CLU_061901_2_1_6"/>
<dbReference type="InParanoid" id="P0A6K3"/>
<dbReference type="OMA" id="VCIQHEI"/>
<dbReference type="OrthoDB" id="9804313at2"/>
<dbReference type="PhylomeDB" id="P0A6K3"/>
<dbReference type="BioCyc" id="EcoCyc:EG11440-MONOMER"/>
<dbReference type="BioCyc" id="MetaCyc:EG11440-MONOMER"/>
<dbReference type="BRENDA" id="3.5.1.88">
    <property type="organism ID" value="2026"/>
</dbReference>
<dbReference type="SABIO-RK" id="P0A6K3"/>
<dbReference type="EvolutionaryTrace" id="P0A6K3"/>
<dbReference type="PRO" id="PR:P0A6K3"/>
<dbReference type="Proteomes" id="UP000000625">
    <property type="component" value="Chromosome"/>
</dbReference>
<dbReference type="GO" id="GO:0005829">
    <property type="term" value="C:cytosol"/>
    <property type="evidence" value="ECO:0000314"/>
    <property type="project" value="EcoCyc"/>
</dbReference>
<dbReference type="GO" id="GO:0008198">
    <property type="term" value="F:ferrous iron binding"/>
    <property type="evidence" value="ECO:0000314"/>
    <property type="project" value="EcoCyc"/>
</dbReference>
<dbReference type="GO" id="GO:0016787">
    <property type="term" value="F:hydrolase activity"/>
    <property type="evidence" value="ECO:0000314"/>
    <property type="project" value="EcoliWiki"/>
</dbReference>
<dbReference type="GO" id="GO:0042586">
    <property type="term" value="F:peptide deformylase activity"/>
    <property type="evidence" value="ECO:0000314"/>
    <property type="project" value="EcoliWiki"/>
</dbReference>
<dbReference type="GO" id="GO:0043022">
    <property type="term" value="F:ribosome binding"/>
    <property type="evidence" value="ECO:0000314"/>
    <property type="project" value="EcoCyc"/>
</dbReference>
<dbReference type="GO" id="GO:0008270">
    <property type="term" value="F:zinc ion binding"/>
    <property type="evidence" value="ECO:0000314"/>
    <property type="project" value="EcoliWiki"/>
</dbReference>
<dbReference type="GO" id="GO:0043686">
    <property type="term" value="P:co-translational protein modification"/>
    <property type="evidence" value="ECO:0000353"/>
    <property type="project" value="EcoCyc"/>
</dbReference>
<dbReference type="GO" id="GO:0006412">
    <property type="term" value="P:translation"/>
    <property type="evidence" value="ECO:0007669"/>
    <property type="project" value="UniProtKB-UniRule"/>
</dbReference>
<dbReference type="CDD" id="cd00487">
    <property type="entry name" value="Pep_deformylase"/>
    <property type="match status" value="1"/>
</dbReference>
<dbReference type="FunFam" id="3.90.45.10:FF:000001">
    <property type="entry name" value="Peptide deformylase"/>
    <property type="match status" value="1"/>
</dbReference>
<dbReference type="Gene3D" id="3.90.45.10">
    <property type="entry name" value="Peptide deformylase"/>
    <property type="match status" value="1"/>
</dbReference>
<dbReference type="HAMAP" id="MF_00163">
    <property type="entry name" value="Pep_deformylase"/>
    <property type="match status" value="1"/>
</dbReference>
<dbReference type="InterPro" id="IPR023635">
    <property type="entry name" value="Peptide_deformylase"/>
</dbReference>
<dbReference type="InterPro" id="IPR036821">
    <property type="entry name" value="Peptide_deformylase_sf"/>
</dbReference>
<dbReference type="NCBIfam" id="TIGR00079">
    <property type="entry name" value="pept_deformyl"/>
    <property type="match status" value="1"/>
</dbReference>
<dbReference type="NCBIfam" id="NF001159">
    <property type="entry name" value="PRK00150.1-3"/>
    <property type="match status" value="1"/>
</dbReference>
<dbReference type="PANTHER" id="PTHR10458">
    <property type="entry name" value="PEPTIDE DEFORMYLASE"/>
    <property type="match status" value="1"/>
</dbReference>
<dbReference type="PANTHER" id="PTHR10458:SF21">
    <property type="entry name" value="PEPTIDE DEFORMYLASE"/>
    <property type="match status" value="1"/>
</dbReference>
<dbReference type="Pfam" id="PF01327">
    <property type="entry name" value="Pep_deformylase"/>
    <property type="match status" value="1"/>
</dbReference>
<dbReference type="PIRSF" id="PIRSF004749">
    <property type="entry name" value="Pep_def"/>
    <property type="match status" value="1"/>
</dbReference>
<dbReference type="PRINTS" id="PR01576">
    <property type="entry name" value="PDEFORMYLASE"/>
</dbReference>
<dbReference type="SUPFAM" id="SSF56420">
    <property type="entry name" value="Peptide deformylase"/>
    <property type="match status" value="1"/>
</dbReference>
<organism>
    <name type="scientific">Escherichia coli (strain K12)</name>
    <dbReference type="NCBI Taxonomy" id="83333"/>
    <lineage>
        <taxon>Bacteria</taxon>
        <taxon>Pseudomonadati</taxon>
        <taxon>Pseudomonadota</taxon>
        <taxon>Gammaproteobacteria</taxon>
        <taxon>Enterobacterales</taxon>
        <taxon>Enterobacteriaceae</taxon>
        <taxon>Escherichia</taxon>
    </lineage>
</organism>
<reference key="1">
    <citation type="journal article" date="1994" name="EMBO J.">
        <title>Genetic characterization of polypeptide deformylase, a distinctive enzyme of eubacterial translation.</title>
        <authorList>
            <person name="Mazel D."/>
            <person name="Pochet S."/>
            <person name="Marliere P."/>
        </authorList>
    </citation>
    <scope>NUCLEOTIDE SEQUENCE [GENOMIC DNA]</scope>
    <scope>CHARACTERIZATION</scope>
    <source>
        <strain>K12</strain>
    </source>
</reference>
<reference key="2">
    <citation type="journal article" date="1992" name="J. Bacteriol.">
        <title>Disruption of the gene for Met-tRNA(fMet) formyltransferase severely impairs growth of Escherichia coli.</title>
        <authorList>
            <person name="Guillon J.-M."/>
            <person name="Mechulam Y."/>
            <person name="Schmitter J.-M."/>
            <person name="Blanquet S."/>
            <person name="Fayat G."/>
        </authorList>
    </citation>
    <scope>NUCLEOTIDE SEQUENCE [GENOMIC DNA]</scope>
    <source>
        <strain>K12 / K37</strain>
    </source>
</reference>
<reference key="3">
    <citation type="journal article" date="1997" name="Science">
        <title>The complete genome sequence of Escherichia coli K-12.</title>
        <authorList>
            <person name="Blattner F.R."/>
            <person name="Plunkett G. III"/>
            <person name="Bloch C.A."/>
            <person name="Perna N.T."/>
            <person name="Burland V."/>
            <person name="Riley M."/>
            <person name="Collado-Vides J."/>
            <person name="Glasner J.D."/>
            <person name="Rode C.K."/>
            <person name="Mayhew G.F."/>
            <person name="Gregor J."/>
            <person name="Davis N.W."/>
            <person name="Kirkpatrick H.A."/>
            <person name="Goeden M.A."/>
            <person name="Rose D.J."/>
            <person name="Mau B."/>
            <person name="Shao Y."/>
        </authorList>
    </citation>
    <scope>NUCLEOTIDE SEQUENCE [LARGE SCALE GENOMIC DNA]</scope>
    <source>
        <strain>K12 / MG1655 / ATCC 47076</strain>
    </source>
</reference>
<reference key="4">
    <citation type="journal article" date="2006" name="Mol. Syst. Biol.">
        <title>Highly accurate genome sequences of Escherichia coli K-12 strains MG1655 and W3110.</title>
        <authorList>
            <person name="Hayashi K."/>
            <person name="Morooka N."/>
            <person name="Yamamoto Y."/>
            <person name="Fujita K."/>
            <person name="Isono K."/>
            <person name="Choi S."/>
            <person name="Ohtsubo E."/>
            <person name="Baba T."/>
            <person name="Wanner B.L."/>
            <person name="Mori H."/>
            <person name="Horiuchi T."/>
        </authorList>
    </citation>
    <scope>NUCLEOTIDE SEQUENCE [LARGE SCALE GENOMIC DNA]</scope>
    <source>
        <strain>K12 / W3110 / ATCC 27325 / DSM 5911</strain>
    </source>
</reference>
<reference key="5">
    <citation type="journal article" date="1993" name="J. Bacteriol.">
        <title>The Escherichia coli fmt gene, encoding methionyl-tRNA(fMet) formyltransferase, escapes metabolic control.</title>
        <authorList>
            <person name="Meinnel T."/>
            <person name="Guillon J.-M."/>
            <person name="Mechulam Y."/>
            <person name="Blanquet S."/>
        </authorList>
    </citation>
    <scope>NUCLEOTIDE SEQUENCE [GENOMIC DNA] OF 1-16</scope>
    <source>
        <strain>K12 / K37</strain>
    </source>
</reference>
<reference key="6">
    <citation type="journal article" date="1993" name="J. Bacteriol.">
        <title>Evidence that peptide deformylase and methionyl-tRNA(fMet) formyltransferase are encoded within the same operon in Escherichia coli.</title>
        <authorList>
            <person name="Meinnel T."/>
            <person name="Blanquet S."/>
        </authorList>
    </citation>
    <scope>PROTEIN SEQUENCE OF 2-7</scope>
    <scope>COFACTOR</scope>
    <scope>MASS SPECTROMETRY</scope>
</reference>
<reference key="7">
    <citation type="journal article" date="1995" name="J. Bacteriol.">
        <title>Enzymatic properties of Escherichia coli peptide deformylase.</title>
        <authorList>
            <person name="Meinnel T."/>
            <person name="Blanquet S."/>
        </authorList>
    </citation>
    <scope>FUNCTION</scope>
    <scope>ACTIVITY REGULATION</scope>
    <scope>COFACTOR</scope>
    <scope>CATALYTIC ACTIVITY</scope>
</reference>
<reference key="8">
    <citation type="journal article" date="1998" name="Biochem. Biophys. Res. Commun.">
        <title>Isolation and crystallization of functionally competent Escherichia coli peptide deformylase forms containing either iron or nickel in the active site.</title>
        <authorList>
            <person name="Groche D."/>
            <person name="Becker A."/>
            <person name="Schlichting I."/>
            <person name="Kabsch W."/>
            <person name="Schultz S."/>
            <person name="Wagner A.F."/>
        </authorList>
    </citation>
    <scope>COFACTOR</scope>
</reference>
<reference key="9">
    <citation type="journal article" date="1996" name="J. Mol. Biol.">
        <title>A new subclass of the zinc metalloproteases superfamily revealed by the solution structure of peptide deformylase.</title>
        <authorList>
            <person name="Meinnel T."/>
            <person name="Blanquet S."/>
            <person name="Dardel F."/>
        </authorList>
    </citation>
    <scope>STRUCTURE BY NMR</scope>
</reference>
<reference key="10">
    <citation type="journal article" date="1998" name="J. Mol. Biol.">
        <title>Solution structure of nickel-peptide deformylase.</title>
        <authorList>
            <person name="Dardel F."/>
            <person name="Ragusa S."/>
            <person name="Lazennec C."/>
            <person name="Blanquet S."/>
            <person name="Meinnel T."/>
        </authorList>
    </citation>
    <scope>STRUCTURE BY NMR</scope>
</reference>
<reference key="11">
    <citation type="journal article" date="1997" name="Biochemistry">
        <title>Crystal structure of the Escherichia coli peptide deformylase.</title>
        <authorList>
            <person name="Chan M.K."/>
            <person name="Gong W."/>
            <person name="Rajagopalan P.T.R."/>
            <person name="Hao B."/>
            <person name="Tsai C.M."/>
            <person name="Pei D."/>
        </authorList>
    </citation>
    <scope>X-RAY CRYSTALLOGRAPHY (2.9 ANGSTROMS)</scope>
</reference>
<reference key="12">
    <citation type="journal article" date="1998" name="Biochemistry">
        <authorList>
            <person name="Chan M.K."/>
            <person name="Gong W."/>
            <person name="Rajagopalan P.T.R."/>
            <person name="Hao B."/>
            <person name="Tsai C.M."/>
            <person name="Pei D."/>
        </authorList>
    </citation>
    <scope>ERRATUM OF PUBMED:9374869</scope>
</reference>
<reference key="13">
    <citation type="journal article" date="1998" name="J. Biol. Chem.">
        <title>Structure of peptide deformylase and identification of the substrate binding site.</title>
        <authorList>
            <person name="Becker A."/>
            <person name="Schlichting I."/>
            <person name="Kabsch W."/>
            <person name="Schultz S."/>
            <person name="Wagner A.F."/>
        </authorList>
    </citation>
    <scope>X-RAY CRYSTALLOGRAPHY (1.9 ANGSTROMS)</scope>
</reference>
<reference key="14">
    <citation type="journal article" date="1998" name="Nat. Struct. Biol.">
        <title>Iron center, substrate recognition and mechanism of peptide deformylase.</title>
        <authorList>
            <person name="Becker A."/>
            <person name="Schlichting I."/>
            <person name="Kabsch W."/>
            <person name="Groche D."/>
            <person name="Schultz S."/>
            <person name="Wagner A.F."/>
        </authorList>
    </citation>
    <scope>X-RAY CRYSTALLOGRAPHY (1.9 ANGSTROMS) IN COMPLEX WITH IRON</scope>
    <scope>COFACTOR</scope>
    <scope>ACTIVE SITE</scope>
</reference>
<reference key="15">
    <citation type="journal article" date="1999" name="Biochemistry">
        <title>Structural basis for the design of antibiotics targeting peptide deformylase.</title>
        <authorList>
            <person name="Hao B."/>
            <person name="Gong W."/>
            <person name="Rajagopalan P.T.R."/>
            <person name="Zhou Y."/>
            <person name="Pei D."/>
            <person name="Chan M.K."/>
        </authorList>
    </citation>
    <scope>X-RAY CRYSTALLOGRAPHY (3.00 ANGSTROMS) OF 2-169</scope>
</reference>
<accession>P0A6K3</accession>
<accession>P27251</accession>
<accession>Q2M6V1</accession>
<evidence type="ECO:0000269" key="1">
    <source>
    </source>
</evidence>
<evidence type="ECO:0000269" key="2">
    <source>
    </source>
</evidence>
<evidence type="ECO:0000269" key="3">
    <source>
    </source>
</evidence>
<evidence type="ECO:0000269" key="4">
    <source>
    </source>
</evidence>
<evidence type="ECO:0000303" key="5">
    <source>
    </source>
</evidence>
<evidence type="ECO:0000305" key="6"/>
<evidence type="ECO:0000305" key="7">
    <source>
    </source>
</evidence>
<evidence type="ECO:0000305" key="8">
    <source>
    </source>
</evidence>
<evidence type="ECO:0007829" key="9">
    <source>
        <dbReference type="PDB" id="1BS6"/>
    </source>
</evidence>
<evidence type="ECO:0007829" key="10">
    <source>
        <dbReference type="PDB" id="1DEF"/>
    </source>
</evidence>
<evidence type="ECO:0007829" key="11">
    <source>
        <dbReference type="PDB" id="1XEO"/>
    </source>
</evidence>
<evidence type="ECO:0007829" key="12">
    <source>
        <dbReference type="PDB" id="2W3T"/>
    </source>
</evidence>
<keyword id="KW-0002">3D-structure</keyword>
<keyword id="KW-0903">Direct protein sequencing</keyword>
<keyword id="KW-0378">Hydrolase</keyword>
<keyword id="KW-0408">Iron</keyword>
<keyword id="KW-0479">Metal-binding</keyword>
<keyword id="KW-0648">Protein biosynthesis</keyword>
<keyword id="KW-1185">Reference proteome</keyword>
<keyword id="KW-0862">Zinc</keyword>
<comment type="function">
    <text evidence="1 3 8">Removes the formyl group from the N-terminal Met of newly synthesized proteins (PubMed:7896716). Requires at least a dipeptide for an efficient rate of reaction. N-terminal L-methionine is a prerequisite for activity but the enzyme has broad specificity at other positions.</text>
</comment>
<comment type="catalytic activity">
    <reaction evidence="1">
        <text>N-terminal N-formyl-L-methionyl-[peptide] + H2O = N-terminal L-methionyl-[peptide] + formate</text>
        <dbReference type="Rhea" id="RHEA:24420"/>
        <dbReference type="Rhea" id="RHEA-COMP:10639"/>
        <dbReference type="Rhea" id="RHEA-COMP:10640"/>
        <dbReference type="ChEBI" id="CHEBI:15377"/>
        <dbReference type="ChEBI" id="CHEBI:15740"/>
        <dbReference type="ChEBI" id="CHEBI:49298"/>
        <dbReference type="ChEBI" id="CHEBI:64731"/>
        <dbReference type="EC" id="3.5.1.88"/>
    </reaction>
    <physiologicalReaction direction="right-to-left" evidence="7">
        <dbReference type="Rhea" id="RHEA:24422"/>
    </physiologicalReaction>
</comment>
<comment type="cofactor">
    <cofactor evidence="3 4">
        <name>Fe(2+)</name>
        <dbReference type="ChEBI" id="CHEBI:29033"/>
    </cofactor>
    <cofactor evidence="2 7">
        <name>Zn(2+)</name>
        <dbReference type="ChEBI" id="CHEBI:29105"/>
    </cofactor>
    <text evidence="3">Upon overproduction is isolated with 1 Fe(2+) ion per monomer, a Ni(2+)-bound form is as active while a Zn(2+)-bound form is inactive (PubMed:9610360).</text>
</comment>
<comment type="activity regulation">
    <text evidence="1">Inhibited by 1,10-phenanthroline.</text>
</comment>
<comment type="subunit">
    <text>Monomer.</text>
</comment>
<comment type="interaction">
    <interactant intactId="EBI-548913">
        <id>P0A6K3</id>
    </interactant>
    <interactant intactId="EBI-545597">
        <id>P60723</id>
        <label>rplD</label>
    </interactant>
    <organismsDiffer>false</organismsDiffer>
    <experiments>4</experiments>
</comment>
<comment type="interaction">
    <interactant intactId="EBI-548913">
        <id>P0A6K3</id>
    </interactant>
    <interactant intactId="EBI-544558">
        <id>P0AG44</id>
        <label>rplQ</label>
    </interactant>
    <organismsDiffer>false</organismsDiffer>
    <experiments>3</experiments>
</comment>
<comment type="interaction">
    <interactant intactId="EBI-548913">
        <id>P0A6K3</id>
    </interactant>
    <interactant intactId="EBI-542255">
        <id>P61175</id>
        <label>rplV</label>
    </interactant>
    <organismsDiffer>false</organismsDiffer>
    <experiments>3</experiments>
</comment>
<comment type="interaction">
    <interactant intactId="EBI-548913">
        <id>P0A6K3</id>
    </interactant>
    <interactant intactId="EBI-548921">
        <id>P08390</id>
        <label>usg</label>
    </interactant>
    <organismsDiffer>false</organismsDiffer>
    <experiments>3</experiments>
</comment>
<comment type="mass spectrometry" mass="19175.0" error="50.0" method="MALDI" evidence="2"/>
<comment type="similarity">
    <text evidence="6">Belongs to the polypeptide deformylase family.</text>
</comment>